<gene>
    <name evidence="1" type="primary">petB</name>
</gene>
<evidence type="ECO:0000255" key="1">
    <source>
        <dbReference type="HAMAP-Rule" id="MF_00633"/>
    </source>
</evidence>
<proteinExistence type="inferred from homology"/>
<reference key="1">
    <citation type="journal article" date="1995" name="Plant Mol. Biol. Rep.">
        <title>Complete nucleotide sequence of the Porphyra purpurea chloroplast genome.</title>
        <authorList>
            <person name="Reith M.E."/>
            <person name="Munholland J."/>
        </authorList>
    </citation>
    <scope>NUCLEOTIDE SEQUENCE [LARGE SCALE GENOMIC DNA]</scope>
    <source>
        <strain>Avonport</strain>
    </source>
</reference>
<sequence length="215" mass="24224">MSKIYDWFEERLEIQAIADDISSKYVPPHVNIFYCLGGIVFVSFLIQVATGFAMTFYYRPTVAEAFTSVEYIMTDVNFGWLIRSIHRWSASMMVLMMILHVFRVYLTGGFKKPRELTWVTGVILGVLTVSFGVTGYSLPWDQIGYWAVKIVTGVPDAVPVVGESIVELLRGGVSVGQGTLTRFYSLHTFVLPLLTAVFMLMHFLMIRKQGISGPL</sequence>
<organism>
    <name type="scientific">Porphyra purpurea</name>
    <name type="common">Red seaweed</name>
    <name type="synonym">Ulva purpurea</name>
    <dbReference type="NCBI Taxonomy" id="2787"/>
    <lineage>
        <taxon>Eukaryota</taxon>
        <taxon>Rhodophyta</taxon>
        <taxon>Bangiophyceae</taxon>
        <taxon>Bangiales</taxon>
        <taxon>Bangiaceae</taxon>
        <taxon>Porphyra</taxon>
    </lineage>
</organism>
<keyword id="KW-0150">Chloroplast</keyword>
<keyword id="KW-0249">Electron transport</keyword>
<keyword id="KW-0349">Heme</keyword>
<keyword id="KW-0408">Iron</keyword>
<keyword id="KW-0472">Membrane</keyword>
<keyword id="KW-0479">Metal-binding</keyword>
<keyword id="KW-0602">Photosynthesis</keyword>
<keyword id="KW-0934">Plastid</keyword>
<keyword id="KW-0793">Thylakoid</keyword>
<keyword id="KW-0812">Transmembrane</keyword>
<keyword id="KW-1133">Transmembrane helix</keyword>
<keyword id="KW-0813">Transport</keyword>
<feature type="chain" id="PRO_0000061816" description="Cytochrome b6">
    <location>
        <begin position="1"/>
        <end position="215"/>
    </location>
</feature>
<feature type="transmembrane region" description="Helical" evidence="1">
    <location>
        <begin position="32"/>
        <end position="52"/>
    </location>
</feature>
<feature type="transmembrane region" description="Helical" evidence="1">
    <location>
        <begin position="90"/>
        <end position="110"/>
    </location>
</feature>
<feature type="transmembrane region" description="Helical" evidence="1">
    <location>
        <begin position="116"/>
        <end position="136"/>
    </location>
</feature>
<feature type="transmembrane region" description="Helical" evidence="1">
    <location>
        <begin position="186"/>
        <end position="206"/>
    </location>
</feature>
<feature type="binding site" description="covalent" evidence="1">
    <location>
        <position position="35"/>
    </location>
    <ligand>
        <name>heme c</name>
        <dbReference type="ChEBI" id="CHEBI:61717"/>
    </ligand>
</feature>
<feature type="binding site" description="axial binding residue" evidence="1">
    <location>
        <position position="86"/>
    </location>
    <ligand>
        <name>heme b</name>
        <dbReference type="ChEBI" id="CHEBI:60344"/>
        <label>2</label>
    </ligand>
    <ligandPart>
        <name>Fe</name>
        <dbReference type="ChEBI" id="CHEBI:18248"/>
    </ligandPart>
</feature>
<feature type="binding site" description="axial binding residue" evidence="1">
    <location>
        <position position="100"/>
    </location>
    <ligand>
        <name>heme b</name>
        <dbReference type="ChEBI" id="CHEBI:60344"/>
        <label>1</label>
    </ligand>
    <ligandPart>
        <name>Fe</name>
        <dbReference type="ChEBI" id="CHEBI:18248"/>
    </ligandPart>
</feature>
<feature type="binding site" description="axial binding residue" evidence="1">
    <location>
        <position position="187"/>
    </location>
    <ligand>
        <name>heme b</name>
        <dbReference type="ChEBI" id="CHEBI:60344"/>
        <label>2</label>
    </ligand>
    <ligandPart>
        <name>Fe</name>
        <dbReference type="ChEBI" id="CHEBI:18248"/>
    </ligandPart>
</feature>
<feature type="binding site" description="axial binding residue" evidence="1">
    <location>
        <position position="202"/>
    </location>
    <ligand>
        <name>heme b</name>
        <dbReference type="ChEBI" id="CHEBI:60344"/>
        <label>1</label>
    </ligand>
    <ligandPart>
        <name>Fe</name>
        <dbReference type="ChEBI" id="CHEBI:18248"/>
    </ligandPart>
</feature>
<name>CYB6_PORPU</name>
<dbReference type="EMBL" id="U38804">
    <property type="protein sequence ID" value="AAC08227.1"/>
    <property type="molecule type" value="Genomic_DNA"/>
</dbReference>
<dbReference type="PIR" id="S73262">
    <property type="entry name" value="S73262"/>
</dbReference>
<dbReference type="RefSeq" id="NP_053951.1">
    <property type="nucleotide sequence ID" value="NC_000925.1"/>
</dbReference>
<dbReference type="SMR" id="P51341"/>
<dbReference type="GeneID" id="809977"/>
<dbReference type="GO" id="GO:0009535">
    <property type="term" value="C:chloroplast thylakoid membrane"/>
    <property type="evidence" value="ECO:0007669"/>
    <property type="project" value="UniProtKB-SubCell"/>
</dbReference>
<dbReference type="GO" id="GO:0045158">
    <property type="term" value="F:electron transporter, transferring electrons within cytochrome b6/f complex of photosystem II activity"/>
    <property type="evidence" value="ECO:0007669"/>
    <property type="project" value="UniProtKB-UniRule"/>
</dbReference>
<dbReference type="GO" id="GO:0046872">
    <property type="term" value="F:metal ion binding"/>
    <property type="evidence" value="ECO:0007669"/>
    <property type="project" value="UniProtKB-KW"/>
</dbReference>
<dbReference type="GO" id="GO:0016491">
    <property type="term" value="F:oxidoreductase activity"/>
    <property type="evidence" value="ECO:0007669"/>
    <property type="project" value="InterPro"/>
</dbReference>
<dbReference type="GO" id="GO:0015979">
    <property type="term" value="P:photosynthesis"/>
    <property type="evidence" value="ECO:0007669"/>
    <property type="project" value="UniProtKB-UniRule"/>
</dbReference>
<dbReference type="GO" id="GO:0022904">
    <property type="term" value="P:respiratory electron transport chain"/>
    <property type="evidence" value="ECO:0007669"/>
    <property type="project" value="InterPro"/>
</dbReference>
<dbReference type="CDD" id="cd00284">
    <property type="entry name" value="Cytochrome_b_N"/>
    <property type="match status" value="1"/>
</dbReference>
<dbReference type="FunFam" id="1.20.810.10:FF:000001">
    <property type="entry name" value="Cytochrome b6"/>
    <property type="match status" value="1"/>
</dbReference>
<dbReference type="Gene3D" id="1.20.810.10">
    <property type="entry name" value="Cytochrome Bc1 Complex, Chain C"/>
    <property type="match status" value="1"/>
</dbReference>
<dbReference type="HAMAP" id="MF_00633">
    <property type="entry name" value="Cytb6_f_cytb6"/>
    <property type="match status" value="1"/>
</dbReference>
<dbReference type="InterPro" id="IPR005797">
    <property type="entry name" value="Cyt_b/b6_N"/>
</dbReference>
<dbReference type="InterPro" id="IPR023530">
    <property type="entry name" value="Cyt_B6_PetB"/>
</dbReference>
<dbReference type="InterPro" id="IPR027387">
    <property type="entry name" value="Cytb/b6-like_sf"/>
</dbReference>
<dbReference type="InterPro" id="IPR048259">
    <property type="entry name" value="Cytochrome_b_N_euk/bac"/>
</dbReference>
<dbReference type="InterPro" id="IPR016174">
    <property type="entry name" value="Di-haem_cyt_TM"/>
</dbReference>
<dbReference type="NCBIfam" id="NF002990">
    <property type="entry name" value="PRK03735.1"/>
    <property type="match status" value="1"/>
</dbReference>
<dbReference type="PANTHER" id="PTHR19271">
    <property type="entry name" value="CYTOCHROME B"/>
    <property type="match status" value="1"/>
</dbReference>
<dbReference type="PANTHER" id="PTHR19271:SF16">
    <property type="entry name" value="CYTOCHROME B"/>
    <property type="match status" value="1"/>
</dbReference>
<dbReference type="Pfam" id="PF00033">
    <property type="entry name" value="Cytochrome_B"/>
    <property type="match status" value="1"/>
</dbReference>
<dbReference type="PIRSF" id="PIRSF000032">
    <property type="entry name" value="Cytochrome_b6"/>
    <property type="match status" value="1"/>
</dbReference>
<dbReference type="SUPFAM" id="SSF81342">
    <property type="entry name" value="Transmembrane di-heme cytochromes"/>
    <property type="match status" value="1"/>
</dbReference>
<dbReference type="PROSITE" id="PS51002">
    <property type="entry name" value="CYTB_NTER"/>
    <property type="match status" value="1"/>
</dbReference>
<geneLocation type="chloroplast"/>
<accession>P51341</accession>
<protein>
    <recommendedName>
        <fullName evidence="1">Cytochrome b6</fullName>
    </recommendedName>
</protein>
<comment type="function">
    <text evidence="1">Component of the cytochrome b6-f complex, which mediates electron transfer between photosystem II (PSII) and photosystem I (PSI), cyclic electron flow around PSI, and state transitions.</text>
</comment>
<comment type="cofactor">
    <cofactor evidence="1">
        <name>heme b</name>
        <dbReference type="ChEBI" id="CHEBI:60344"/>
    </cofactor>
    <text evidence="1">Binds 2 heme b groups non-covalently with two histidine residues as axial ligands.</text>
</comment>
<comment type="cofactor">
    <cofactor evidence="1">
        <name>heme c</name>
        <dbReference type="ChEBI" id="CHEBI:61717"/>
    </cofactor>
    <text evidence="1">Binds one heme group covalently by a single cysteine link with no axial amino acid ligand. This heme was named heme ci.</text>
</comment>
<comment type="subunit">
    <text evidence="1">The 4 large subunits of the cytochrome b6-f complex are cytochrome b6, subunit IV (17 kDa polypeptide, PetD), cytochrome f and the Rieske protein, while the 4 small subunits are PetG, PetL, PetM and PetN. The complex functions as a dimer.</text>
</comment>
<comment type="subcellular location">
    <subcellularLocation>
        <location evidence="1">Plastid</location>
        <location evidence="1">Chloroplast thylakoid membrane</location>
        <topology evidence="1">Multi-pass membrane protein</topology>
    </subcellularLocation>
</comment>
<comment type="miscellaneous">
    <text evidence="1">Heme 1 (or BH or b566) is high-potential and absorbs at about 566 nm, and heme 2 (or BL or b562) is low-potential and absorbs at about 562 nm.</text>
</comment>
<comment type="similarity">
    <text evidence="1">Belongs to the cytochrome b family. PetB subfamily.</text>
</comment>